<accession>Q7MK65</accession>
<feature type="chain" id="PRO_0000101085" description="Threonine--tRNA ligase">
    <location>
        <begin position="1"/>
        <end position="642"/>
    </location>
</feature>
<feature type="domain" description="TGS" evidence="2">
    <location>
        <begin position="1"/>
        <end position="61"/>
    </location>
</feature>
<feature type="region of interest" description="Catalytic" evidence="1">
    <location>
        <begin position="244"/>
        <end position="535"/>
    </location>
</feature>
<feature type="binding site" evidence="1">
    <location>
        <position position="335"/>
    </location>
    <ligand>
        <name>Zn(2+)</name>
        <dbReference type="ChEBI" id="CHEBI:29105"/>
    </ligand>
</feature>
<feature type="binding site" evidence="1">
    <location>
        <position position="386"/>
    </location>
    <ligand>
        <name>Zn(2+)</name>
        <dbReference type="ChEBI" id="CHEBI:29105"/>
    </ligand>
</feature>
<feature type="binding site" evidence="1">
    <location>
        <position position="512"/>
    </location>
    <ligand>
        <name>Zn(2+)</name>
        <dbReference type="ChEBI" id="CHEBI:29105"/>
    </ligand>
</feature>
<organism>
    <name type="scientific">Vibrio vulnificus (strain YJ016)</name>
    <dbReference type="NCBI Taxonomy" id="196600"/>
    <lineage>
        <taxon>Bacteria</taxon>
        <taxon>Pseudomonadati</taxon>
        <taxon>Pseudomonadota</taxon>
        <taxon>Gammaproteobacteria</taxon>
        <taxon>Vibrionales</taxon>
        <taxon>Vibrionaceae</taxon>
        <taxon>Vibrio</taxon>
    </lineage>
</organism>
<evidence type="ECO:0000255" key="1">
    <source>
        <dbReference type="HAMAP-Rule" id="MF_00184"/>
    </source>
</evidence>
<evidence type="ECO:0000255" key="2">
    <source>
        <dbReference type="PROSITE-ProRule" id="PRU01228"/>
    </source>
</evidence>
<evidence type="ECO:0000305" key="3"/>
<sequence>MPIITLPDGSQRQFDNSVSTMDVALSIGPGLAKATIAGRVNGQRVDACDLIEEDASLEIITTKDEVDGLEIVRHSCAHLLGHALKQLYPNAKMAIGPTIDNGFYYDIDLEESLTQEDLEKIEARMKALAKTKYQVIKKKVSWQEARDAFEARGETYKMEILDENVSRDDRPGLYHHEEYIDMCRGPHVPNMSFCQHFTLLNVAGAYWRGNSDNKMLQRIYGTAFHDKKALKDHLTRLEEAAKRDHRKIGKQLDLFHMQQEAPGMVFWHHNGWSVFRDLEVFIREKLTEYGYQEVKGPLMMDRVLWERSGHWDKYADAMFTTSSENREYAIKPMNCPGHVQIFNQGLKSYRDLPLRMAEFGSCHRNEPSGALHGIMRVRGFTQDDAHIFCTESQIQDEVTNCIKMVYDTYQTFGFDNIAVKLSTRPEQRVGSDEIWDQSEEALKQALESMDIAYEIQEGEGAFYGPKIEFTLFDCLGRAWQCGTVQLDFNLPNRLGATYVGENNERLVPVMIHRAILGSLERFIGILIEEYAGFFPTWLAPEQAVIMNITDKQADYVQEIAQKLQKCGIRAKADLRNEKIGFKIREHTLKRVPFMLVCGDQEMEAGEIAVRTRKGNDLGKFKVDDFVSYIQDQIASRKLNLEE</sequence>
<gene>
    <name evidence="1" type="primary">thrS</name>
    <name type="ordered locus">VV1945</name>
</gene>
<comment type="function">
    <text evidence="1">Catalyzes the attachment of threonine to tRNA(Thr) in a two-step reaction: L-threonine is first activated by ATP to form Thr-AMP and then transferred to the acceptor end of tRNA(Thr). Also edits incorrectly charged L-seryl-tRNA(Thr).</text>
</comment>
<comment type="catalytic activity">
    <reaction evidence="1">
        <text>tRNA(Thr) + L-threonine + ATP = L-threonyl-tRNA(Thr) + AMP + diphosphate + H(+)</text>
        <dbReference type="Rhea" id="RHEA:24624"/>
        <dbReference type="Rhea" id="RHEA-COMP:9670"/>
        <dbReference type="Rhea" id="RHEA-COMP:9704"/>
        <dbReference type="ChEBI" id="CHEBI:15378"/>
        <dbReference type="ChEBI" id="CHEBI:30616"/>
        <dbReference type="ChEBI" id="CHEBI:33019"/>
        <dbReference type="ChEBI" id="CHEBI:57926"/>
        <dbReference type="ChEBI" id="CHEBI:78442"/>
        <dbReference type="ChEBI" id="CHEBI:78534"/>
        <dbReference type="ChEBI" id="CHEBI:456215"/>
        <dbReference type="EC" id="6.1.1.3"/>
    </reaction>
</comment>
<comment type="cofactor">
    <cofactor evidence="1">
        <name>Zn(2+)</name>
        <dbReference type="ChEBI" id="CHEBI:29105"/>
    </cofactor>
    <text evidence="1">Binds 1 zinc ion per subunit.</text>
</comment>
<comment type="subunit">
    <text evidence="1">Homodimer.</text>
</comment>
<comment type="subcellular location">
    <subcellularLocation>
        <location evidence="1">Cytoplasm</location>
    </subcellularLocation>
</comment>
<comment type="similarity">
    <text evidence="1">Belongs to the class-II aminoacyl-tRNA synthetase family.</text>
</comment>
<comment type="sequence caution" evidence="3">
    <conflict type="erroneous initiation">
        <sequence resource="EMBL-CDS" id="BAC94709"/>
    </conflict>
    <text>Extended N-terminus.</text>
</comment>
<keyword id="KW-0030">Aminoacyl-tRNA synthetase</keyword>
<keyword id="KW-0067">ATP-binding</keyword>
<keyword id="KW-0963">Cytoplasm</keyword>
<keyword id="KW-0436">Ligase</keyword>
<keyword id="KW-0479">Metal-binding</keyword>
<keyword id="KW-0547">Nucleotide-binding</keyword>
<keyword id="KW-0648">Protein biosynthesis</keyword>
<keyword id="KW-0694">RNA-binding</keyword>
<keyword id="KW-0820">tRNA-binding</keyword>
<keyword id="KW-0862">Zinc</keyword>
<reference key="1">
    <citation type="journal article" date="2003" name="Genome Res.">
        <title>Comparative genome analysis of Vibrio vulnificus, a marine pathogen.</title>
        <authorList>
            <person name="Chen C.-Y."/>
            <person name="Wu K.-M."/>
            <person name="Chang Y.-C."/>
            <person name="Chang C.-H."/>
            <person name="Tsai H.-C."/>
            <person name="Liao T.-L."/>
            <person name="Liu Y.-M."/>
            <person name="Chen H.-J."/>
            <person name="Shen A.B.-T."/>
            <person name="Li J.-C."/>
            <person name="Su T.-L."/>
            <person name="Shao C.-P."/>
            <person name="Lee C.-T."/>
            <person name="Hor L.-I."/>
            <person name="Tsai S.-F."/>
        </authorList>
    </citation>
    <scope>NUCLEOTIDE SEQUENCE [LARGE SCALE GENOMIC DNA]</scope>
    <source>
        <strain>YJ016</strain>
    </source>
</reference>
<name>SYT_VIBVY</name>
<proteinExistence type="inferred from homology"/>
<protein>
    <recommendedName>
        <fullName evidence="1">Threonine--tRNA ligase</fullName>
        <ecNumber evidence="1">6.1.1.3</ecNumber>
    </recommendedName>
    <alternativeName>
        <fullName evidence="1">Threonyl-tRNA synthetase</fullName>
        <shortName evidence="1">ThrRS</shortName>
    </alternativeName>
</protein>
<dbReference type="EC" id="6.1.1.3" evidence="1"/>
<dbReference type="EMBL" id="BA000037">
    <property type="protein sequence ID" value="BAC94709.1"/>
    <property type="status" value="ALT_INIT"/>
    <property type="molecule type" value="Genomic_DNA"/>
</dbReference>
<dbReference type="RefSeq" id="WP_043877214.1">
    <property type="nucleotide sequence ID" value="NC_005139.1"/>
</dbReference>
<dbReference type="SMR" id="Q7MK65"/>
<dbReference type="STRING" id="672.VV93_v1c17050"/>
<dbReference type="KEGG" id="vvy:VV1945"/>
<dbReference type="PATRIC" id="fig|196600.6.peg.1973"/>
<dbReference type="eggNOG" id="COG0441">
    <property type="taxonomic scope" value="Bacteria"/>
</dbReference>
<dbReference type="HOGENOM" id="CLU_008554_0_1_6"/>
<dbReference type="Proteomes" id="UP000002675">
    <property type="component" value="Chromosome I"/>
</dbReference>
<dbReference type="GO" id="GO:0005829">
    <property type="term" value="C:cytosol"/>
    <property type="evidence" value="ECO:0007669"/>
    <property type="project" value="TreeGrafter"/>
</dbReference>
<dbReference type="GO" id="GO:0005524">
    <property type="term" value="F:ATP binding"/>
    <property type="evidence" value="ECO:0007669"/>
    <property type="project" value="UniProtKB-UniRule"/>
</dbReference>
<dbReference type="GO" id="GO:0046872">
    <property type="term" value="F:metal ion binding"/>
    <property type="evidence" value="ECO:0007669"/>
    <property type="project" value="UniProtKB-KW"/>
</dbReference>
<dbReference type="GO" id="GO:0004829">
    <property type="term" value="F:threonine-tRNA ligase activity"/>
    <property type="evidence" value="ECO:0007669"/>
    <property type="project" value="UniProtKB-UniRule"/>
</dbReference>
<dbReference type="GO" id="GO:0000049">
    <property type="term" value="F:tRNA binding"/>
    <property type="evidence" value="ECO:0007669"/>
    <property type="project" value="UniProtKB-KW"/>
</dbReference>
<dbReference type="GO" id="GO:0006435">
    <property type="term" value="P:threonyl-tRNA aminoacylation"/>
    <property type="evidence" value="ECO:0007669"/>
    <property type="project" value="UniProtKB-UniRule"/>
</dbReference>
<dbReference type="CDD" id="cd01667">
    <property type="entry name" value="TGS_ThrRS"/>
    <property type="match status" value="1"/>
</dbReference>
<dbReference type="CDD" id="cd00860">
    <property type="entry name" value="ThrRS_anticodon"/>
    <property type="match status" value="1"/>
</dbReference>
<dbReference type="CDD" id="cd00771">
    <property type="entry name" value="ThrRS_core"/>
    <property type="match status" value="1"/>
</dbReference>
<dbReference type="FunFam" id="3.10.20.30:FF:000005">
    <property type="entry name" value="Threonine--tRNA ligase"/>
    <property type="match status" value="1"/>
</dbReference>
<dbReference type="FunFam" id="3.30.54.20:FF:000002">
    <property type="entry name" value="Threonine--tRNA ligase"/>
    <property type="match status" value="1"/>
</dbReference>
<dbReference type="FunFam" id="3.30.930.10:FF:000002">
    <property type="entry name" value="Threonine--tRNA ligase"/>
    <property type="match status" value="1"/>
</dbReference>
<dbReference type="FunFam" id="3.40.50.800:FF:000001">
    <property type="entry name" value="Threonine--tRNA ligase"/>
    <property type="match status" value="1"/>
</dbReference>
<dbReference type="FunFam" id="3.30.980.10:FF:000005">
    <property type="entry name" value="Threonyl-tRNA synthetase, mitochondrial"/>
    <property type="match status" value="1"/>
</dbReference>
<dbReference type="Gene3D" id="3.10.20.30">
    <property type="match status" value="1"/>
</dbReference>
<dbReference type="Gene3D" id="3.30.54.20">
    <property type="match status" value="1"/>
</dbReference>
<dbReference type="Gene3D" id="3.40.50.800">
    <property type="entry name" value="Anticodon-binding domain"/>
    <property type="match status" value="1"/>
</dbReference>
<dbReference type="Gene3D" id="3.30.930.10">
    <property type="entry name" value="Bira Bifunctional Protein, Domain 2"/>
    <property type="match status" value="1"/>
</dbReference>
<dbReference type="Gene3D" id="3.30.980.10">
    <property type="entry name" value="Threonyl-trna Synthetase, Chain A, domain 2"/>
    <property type="match status" value="1"/>
</dbReference>
<dbReference type="HAMAP" id="MF_00184">
    <property type="entry name" value="Thr_tRNA_synth"/>
    <property type="match status" value="1"/>
</dbReference>
<dbReference type="InterPro" id="IPR002314">
    <property type="entry name" value="aa-tRNA-synt_IIb"/>
</dbReference>
<dbReference type="InterPro" id="IPR006195">
    <property type="entry name" value="aa-tRNA-synth_II"/>
</dbReference>
<dbReference type="InterPro" id="IPR045864">
    <property type="entry name" value="aa-tRNA-synth_II/BPL/LPL"/>
</dbReference>
<dbReference type="InterPro" id="IPR004154">
    <property type="entry name" value="Anticodon-bd"/>
</dbReference>
<dbReference type="InterPro" id="IPR036621">
    <property type="entry name" value="Anticodon-bd_dom_sf"/>
</dbReference>
<dbReference type="InterPro" id="IPR012675">
    <property type="entry name" value="Beta-grasp_dom_sf"/>
</dbReference>
<dbReference type="InterPro" id="IPR004095">
    <property type="entry name" value="TGS"/>
</dbReference>
<dbReference type="InterPro" id="IPR012676">
    <property type="entry name" value="TGS-like"/>
</dbReference>
<dbReference type="InterPro" id="IPR002320">
    <property type="entry name" value="Thr-tRNA-ligase_IIa"/>
</dbReference>
<dbReference type="InterPro" id="IPR018163">
    <property type="entry name" value="Thr/Ala-tRNA-synth_IIc_edit"/>
</dbReference>
<dbReference type="InterPro" id="IPR047246">
    <property type="entry name" value="ThrRS_anticodon"/>
</dbReference>
<dbReference type="InterPro" id="IPR033728">
    <property type="entry name" value="ThrRS_core"/>
</dbReference>
<dbReference type="InterPro" id="IPR012947">
    <property type="entry name" value="tRNA_SAD"/>
</dbReference>
<dbReference type="NCBIfam" id="TIGR00418">
    <property type="entry name" value="thrS"/>
    <property type="match status" value="1"/>
</dbReference>
<dbReference type="PANTHER" id="PTHR11451:SF44">
    <property type="entry name" value="THREONINE--TRNA LIGASE, CHLOROPLASTIC_MITOCHONDRIAL 2"/>
    <property type="match status" value="1"/>
</dbReference>
<dbReference type="PANTHER" id="PTHR11451">
    <property type="entry name" value="THREONINE-TRNA LIGASE"/>
    <property type="match status" value="1"/>
</dbReference>
<dbReference type="Pfam" id="PF03129">
    <property type="entry name" value="HGTP_anticodon"/>
    <property type="match status" value="1"/>
</dbReference>
<dbReference type="Pfam" id="PF02824">
    <property type="entry name" value="TGS"/>
    <property type="match status" value="1"/>
</dbReference>
<dbReference type="Pfam" id="PF00587">
    <property type="entry name" value="tRNA-synt_2b"/>
    <property type="match status" value="1"/>
</dbReference>
<dbReference type="Pfam" id="PF07973">
    <property type="entry name" value="tRNA_SAD"/>
    <property type="match status" value="1"/>
</dbReference>
<dbReference type="PRINTS" id="PR01047">
    <property type="entry name" value="TRNASYNTHTHR"/>
</dbReference>
<dbReference type="SMART" id="SM00863">
    <property type="entry name" value="tRNA_SAD"/>
    <property type="match status" value="1"/>
</dbReference>
<dbReference type="SUPFAM" id="SSF52954">
    <property type="entry name" value="Class II aaRS ABD-related"/>
    <property type="match status" value="1"/>
</dbReference>
<dbReference type="SUPFAM" id="SSF55681">
    <property type="entry name" value="Class II aaRS and biotin synthetases"/>
    <property type="match status" value="1"/>
</dbReference>
<dbReference type="SUPFAM" id="SSF81271">
    <property type="entry name" value="TGS-like"/>
    <property type="match status" value="1"/>
</dbReference>
<dbReference type="SUPFAM" id="SSF55186">
    <property type="entry name" value="ThrRS/AlaRS common domain"/>
    <property type="match status" value="1"/>
</dbReference>
<dbReference type="PROSITE" id="PS50862">
    <property type="entry name" value="AA_TRNA_LIGASE_II"/>
    <property type="match status" value="1"/>
</dbReference>
<dbReference type="PROSITE" id="PS51880">
    <property type="entry name" value="TGS"/>
    <property type="match status" value="1"/>
</dbReference>